<sequence>MNLKQLAGEYAATFVKDGMKIGLGTGSTVYWTIEKLGERVKEGLSFQAVPTSKETEVLAQQLNIPLISLNDIQSLDLTIDGADEIDSNLHLIKGGGGALLREKIVASSSKELLIIADESKLVTHLGTFPLPVEIIPFSWKQTESKIQSLGCQTTLRLKNNETFITDNNNMIIDCVFPHNITNPANLHNHLKMITGVVETGLFVNMTSKAIIGTKNGIQEL</sequence>
<feature type="chain" id="PRO_0000158383" description="Ribose-5-phosphate isomerase A">
    <location>
        <begin position="1"/>
        <end position="220"/>
    </location>
</feature>
<feature type="active site" description="Proton acceptor" evidence="1">
    <location>
        <position position="102"/>
    </location>
</feature>
<feature type="binding site" evidence="1">
    <location>
        <begin position="25"/>
        <end position="28"/>
    </location>
    <ligand>
        <name>substrate</name>
    </ligand>
</feature>
<feature type="binding site" evidence="1">
    <location>
        <begin position="80"/>
        <end position="83"/>
    </location>
    <ligand>
        <name>substrate</name>
    </ligand>
</feature>
<feature type="binding site" evidence="1">
    <location>
        <begin position="93"/>
        <end position="96"/>
    </location>
    <ligand>
        <name>substrate</name>
    </ligand>
</feature>
<feature type="binding site" evidence="1">
    <location>
        <position position="120"/>
    </location>
    <ligand>
        <name>substrate</name>
    </ligand>
</feature>
<name>RPIA_BACC1</name>
<gene>
    <name evidence="1" type="primary">rpiA</name>
    <name type="ordered locus">BCE_2822</name>
</gene>
<proteinExistence type="inferred from homology"/>
<protein>
    <recommendedName>
        <fullName evidence="1">Ribose-5-phosphate isomerase A</fullName>
        <ecNumber evidence="1">5.3.1.6</ecNumber>
    </recommendedName>
    <alternativeName>
        <fullName evidence="1">Phosphoriboisomerase A</fullName>
        <shortName evidence="1">PRI</shortName>
    </alternativeName>
</protein>
<reference key="1">
    <citation type="journal article" date="2004" name="Nucleic Acids Res.">
        <title>The genome sequence of Bacillus cereus ATCC 10987 reveals metabolic adaptations and a large plasmid related to Bacillus anthracis pXO1.</title>
        <authorList>
            <person name="Rasko D.A."/>
            <person name="Ravel J."/>
            <person name="Oekstad O.A."/>
            <person name="Helgason E."/>
            <person name="Cer R.Z."/>
            <person name="Jiang L."/>
            <person name="Shores K.A."/>
            <person name="Fouts D.E."/>
            <person name="Tourasse N.J."/>
            <person name="Angiuoli S.V."/>
            <person name="Kolonay J.F."/>
            <person name="Nelson W.C."/>
            <person name="Kolstoe A.-B."/>
            <person name="Fraser C.M."/>
            <person name="Read T.D."/>
        </authorList>
    </citation>
    <scope>NUCLEOTIDE SEQUENCE [LARGE SCALE GENOMIC DNA]</scope>
    <source>
        <strain>ATCC 10987 / NRS 248</strain>
    </source>
</reference>
<accession>Q736S8</accession>
<comment type="function">
    <text evidence="1">Catalyzes the reversible conversion of ribose-5-phosphate to ribulose 5-phosphate.</text>
</comment>
<comment type="catalytic activity">
    <reaction evidence="1">
        <text>aldehydo-D-ribose 5-phosphate = D-ribulose 5-phosphate</text>
        <dbReference type="Rhea" id="RHEA:14657"/>
        <dbReference type="ChEBI" id="CHEBI:58121"/>
        <dbReference type="ChEBI" id="CHEBI:58273"/>
        <dbReference type="EC" id="5.3.1.6"/>
    </reaction>
</comment>
<comment type="pathway">
    <text evidence="1">Carbohydrate degradation; pentose phosphate pathway; D-ribose 5-phosphate from D-ribulose 5-phosphate (non-oxidative stage): step 1/1.</text>
</comment>
<comment type="subunit">
    <text evidence="1">Homodimer.</text>
</comment>
<comment type="similarity">
    <text evidence="1">Belongs to the ribose 5-phosphate isomerase family.</text>
</comment>
<keyword id="KW-0413">Isomerase</keyword>
<dbReference type="EC" id="5.3.1.6" evidence="1"/>
<dbReference type="EMBL" id="AE017194">
    <property type="protein sequence ID" value="AAS41734.1"/>
    <property type="molecule type" value="Genomic_DNA"/>
</dbReference>
<dbReference type="SMR" id="Q736S8"/>
<dbReference type="KEGG" id="bca:BCE_2822"/>
<dbReference type="HOGENOM" id="CLU_056590_1_0_9"/>
<dbReference type="UniPathway" id="UPA00115">
    <property type="reaction ID" value="UER00412"/>
</dbReference>
<dbReference type="Proteomes" id="UP000002527">
    <property type="component" value="Chromosome"/>
</dbReference>
<dbReference type="GO" id="GO:0005829">
    <property type="term" value="C:cytosol"/>
    <property type="evidence" value="ECO:0007669"/>
    <property type="project" value="TreeGrafter"/>
</dbReference>
<dbReference type="GO" id="GO:0004751">
    <property type="term" value="F:ribose-5-phosphate isomerase activity"/>
    <property type="evidence" value="ECO:0007669"/>
    <property type="project" value="UniProtKB-UniRule"/>
</dbReference>
<dbReference type="GO" id="GO:0006014">
    <property type="term" value="P:D-ribose metabolic process"/>
    <property type="evidence" value="ECO:0007669"/>
    <property type="project" value="TreeGrafter"/>
</dbReference>
<dbReference type="GO" id="GO:0009052">
    <property type="term" value="P:pentose-phosphate shunt, non-oxidative branch"/>
    <property type="evidence" value="ECO:0007669"/>
    <property type="project" value="UniProtKB-UniRule"/>
</dbReference>
<dbReference type="CDD" id="cd01398">
    <property type="entry name" value="RPI_A"/>
    <property type="match status" value="1"/>
</dbReference>
<dbReference type="FunFam" id="3.40.50.1360:FF:000001">
    <property type="entry name" value="Ribose-5-phosphate isomerase A"/>
    <property type="match status" value="1"/>
</dbReference>
<dbReference type="Gene3D" id="3.30.70.260">
    <property type="match status" value="1"/>
</dbReference>
<dbReference type="Gene3D" id="3.40.50.1360">
    <property type="match status" value="1"/>
</dbReference>
<dbReference type="HAMAP" id="MF_00170">
    <property type="entry name" value="Rib_5P_isom_A"/>
    <property type="match status" value="1"/>
</dbReference>
<dbReference type="InterPro" id="IPR037171">
    <property type="entry name" value="NagB/RpiA_transferase-like"/>
</dbReference>
<dbReference type="InterPro" id="IPR020672">
    <property type="entry name" value="Ribose5P_isomerase_typA_subgr"/>
</dbReference>
<dbReference type="InterPro" id="IPR004788">
    <property type="entry name" value="Ribose5P_isomerase_type_A"/>
</dbReference>
<dbReference type="NCBIfam" id="NF001924">
    <property type="entry name" value="PRK00702.1"/>
    <property type="match status" value="1"/>
</dbReference>
<dbReference type="NCBIfam" id="TIGR00021">
    <property type="entry name" value="rpiA"/>
    <property type="match status" value="1"/>
</dbReference>
<dbReference type="PANTHER" id="PTHR11934">
    <property type="entry name" value="RIBOSE-5-PHOSPHATE ISOMERASE"/>
    <property type="match status" value="1"/>
</dbReference>
<dbReference type="PANTHER" id="PTHR11934:SF0">
    <property type="entry name" value="RIBOSE-5-PHOSPHATE ISOMERASE"/>
    <property type="match status" value="1"/>
</dbReference>
<dbReference type="Pfam" id="PF06026">
    <property type="entry name" value="Rib_5-P_isom_A"/>
    <property type="match status" value="1"/>
</dbReference>
<dbReference type="SUPFAM" id="SSF75445">
    <property type="entry name" value="D-ribose-5-phosphate isomerase (RpiA), lid domain"/>
    <property type="match status" value="1"/>
</dbReference>
<dbReference type="SUPFAM" id="SSF100950">
    <property type="entry name" value="NagB/RpiA/CoA transferase-like"/>
    <property type="match status" value="1"/>
</dbReference>
<organism>
    <name type="scientific">Bacillus cereus (strain ATCC 10987 / NRS 248)</name>
    <dbReference type="NCBI Taxonomy" id="222523"/>
    <lineage>
        <taxon>Bacteria</taxon>
        <taxon>Bacillati</taxon>
        <taxon>Bacillota</taxon>
        <taxon>Bacilli</taxon>
        <taxon>Bacillales</taxon>
        <taxon>Bacillaceae</taxon>
        <taxon>Bacillus</taxon>
        <taxon>Bacillus cereus group</taxon>
    </lineage>
</organism>
<evidence type="ECO:0000255" key="1">
    <source>
        <dbReference type="HAMAP-Rule" id="MF_00170"/>
    </source>
</evidence>